<proteinExistence type="evidence at protein level"/>
<evidence type="ECO:0000250" key="1"/>
<evidence type="ECO:0000255" key="2">
    <source>
        <dbReference type="PROSITE-ProRule" id="PRU00042"/>
    </source>
</evidence>
<evidence type="ECO:0000256" key="3">
    <source>
        <dbReference type="SAM" id="MobiDB-lite"/>
    </source>
</evidence>
<evidence type="ECO:0000269" key="4">
    <source>
    </source>
</evidence>
<evidence type="ECO:0000269" key="5">
    <source>
    </source>
</evidence>
<evidence type="ECO:0000269" key="6">
    <source>
    </source>
</evidence>
<evidence type="ECO:0000269" key="7">
    <source>
    </source>
</evidence>
<evidence type="ECO:0000269" key="8">
    <source>
    </source>
</evidence>
<evidence type="ECO:0000269" key="9">
    <source>
    </source>
</evidence>
<evidence type="ECO:0000303" key="10">
    <source>
    </source>
</evidence>
<evidence type="ECO:0000305" key="11"/>
<evidence type="ECO:0000305" key="12">
    <source>
    </source>
</evidence>
<evidence type="ECO:0007744" key="13">
    <source>
    </source>
</evidence>
<evidence type="ECO:0007744" key="14">
    <source>
    </source>
</evidence>
<evidence type="ECO:0007744" key="15">
    <source>
    </source>
</evidence>
<evidence type="ECO:0007744" key="16">
    <source>
    </source>
</evidence>
<evidence type="ECO:0007744" key="17">
    <source>
    </source>
</evidence>
<evidence type="ECO:0007829" key="18">
    <source>
        <dbReference type="PDB" id="3P8D"/>
    </source>
</evidence>
<evidence type="ECO:0007829" key="19">
    <source>
        <dbReference type="PDB" id="3SD4"/>
    </source>
</evidence>
<evidence type="ECO:0007829" key="20">
    <source>
        <dbReference type="PDB" id="5TAB"/>
    </source>
</evidence>
<dbReference type="EMBL" id="AF220416">
    <property type="protein sequence ID" value="AAF34184.1"/>
    <property type="status" value="ALT_FRAME"/>
    <property type="molecule type" value="mRNA"/>
</dbReference>
<dbReference type="EMBL" id="AF348207">
    <property type="protein sequence ID" value="AAK19748.1"/>
    <property type="status" value="ALT_FRAME"/>
    <property type="molecule type" value="mRNA"/>
</dbReference>
<dbReference type="EMBL" id="AY027523">
    <property type="protein sequence ID" value="AAK13046.1"/>
    <property type="molecule type" value="mRNA"/>
</dbReference>
<dbReference type="EMBL" id="AK314503">
    <property type="protein sequence ID" value="BAG37103.1"/>
    <property type="molecule type" value="mRNA"/>
</dbReference>
<dbReference type="EMBL" id="AL078461">
    <property type="status" value="NOT_ANNOTATED_CDS"/>
    <property type="molecule type" value="Genomic_DNA"/>
</dbReference>
<dbReference type="EMBL" id="AL109965">
    <property type="status" value="NOT_ANNOTATED_CDS"/>
    <property type="molecule type" value="Genomic_DNA"/>
</dbReference>
<dbReference type="EMBL" id="CH471077">
    <property type="protein sequence ID" value="EAW76153.1"/>
    <property type="molecule type" value="Genomic_DNA"/>
</dbReference>
<dbReference type="EMBL" id="CH471077">
    <property type="protein sequence ID" value="EAW76155.1"/>
    <property type="molecule type" value="Genomic_DNA"/>
</dbReference>
<dbReference type="EMBL" id="CH471077">
    <property type="protein sequence ID" value="EAW76156.1"/>
    <property type="molecule type" value="Genomic_DNA"/>
</dbReference>
<dbReference type="EMBL" id="CH471077">
    <property type="protein sequence ID" value="EAW76157.1"/>
    <property type="molecule type" value="Genomic_DNA"/>
</dbReference>
<dbReference type="EMBL" id="BC048210">
    <property type="protein sequence ID" value="AAH48210.1"/>
    <property type="molecule type" value="mRNA"/>
</dbReference>
<dbReference type="EMBL" id="BC080598">
    <property type="protein sequence ID" value="AAH80598.1"/>
    <property type="molecule type" value="mRNA"/>
</dbReference>
<dbReference type="EMBL" id="BC093405">
    <property type="protein sequence ID" value="AAH93405.1"/>
    <property type="molecule type" value="mRNA"/>
</dbReference>
<dbReference type="EMBL" id="BC150178">
    <property type="protein sequence ID" value="AAI50179.1"/>
    <property type="molecule type" value="mRNA"/>
</dbReference>
<dbReference type="EMBL" id="AF258787">
    <property type="protein sequence ID" value="AAG49888.1"/>
    <property type="molecule type" value="mRNA"/>
</dbReference>
<dbReference type="CCDS" id="CCDS13268.1">
    <molecule id="Q9BVI0-1"/>
</dbReference>
<dbReference type="RefSeq" id="NP_057520.2">
    <molecule id="Q9BVI0-1"/>
    <property type="nucleotide sequence ID" value="NM_016436.4"/>
</dbReference>
<dbReference type="RefSeq" id="XP_016883353.1">
    <property type="nucleotide sequence ID" value="XM_017027864.1"/>
</dbReference>
<dbReference type="RefSeq" id="XP_016883354.1">
    <property type="nucleotide sequence ID" value="XM_017027865.1"/>
</dbReference>
<dbReference type="RefSeq" id="XP_016883355.1">
    <property type="nucleotide sequence ID" value="XM_017027866.1"/>
</dbReference>
<dbReference type="RefSeq" id="XP_016883356.1">
    <property type="nucleotide sequence ID" value="XM_017027867.1"/>
</dbReference>
<dbReference type="RefSeq" id="XP_047296136.1">
    <molecule id="Q9BVI0-1"/>
    <property type="nucleotide sequence ID" value="XM_047440180.1"/>
</dbReference>
<dbReference type="RefSeq" id="XP_047296137.1">
    <molecule id="Q9BVI0-1"/>
    <property type="nucleotide sequence ID" value="XM_047440181.1"/>
</dbReference>
<dbReference type="RefSeq" id="XP_047296138.1">
    <molecule id="Q9BVI0-1"/>
    <property type="nucleotide sequence ID" value="XM_047440182.1"/>
</dbReference>
<dbReference type="RefSeq" id="XP_054179444.1">
    <molecule id="Q9BVI0-1"/>
    <property type="nucleotide sequence ID" value="XM_054323469.1"/>
</dbReference>
<dbReference type="RefSeq" id="XP_054179445.1">
    <molecule id="Q9BVI0-1"/>
    <property type="nucleotide sequence ID" value="XM_054323470.1"/>
</dbReference>
<dbReference type="RefSeq" id="XP_054179446.1">
    <molecule id="Q9BVI0-1"/>
    <property type="nucleotide sequence ID" value="XM_054323471.1"/>
</dbReference>
<dbReference type="PDB" id="2LDM">
    <property type="method" value="NMR"/>
    <property type="chains" value="A=84-147"/>
</dbReference>
<dbReference type="PDB" id="3P8D">
    <property type="method" value="X-ray"/>
    <property type="resolution" value="2.00 A"/>
    <property type="chains" value="A/B=84-147"/>
</dbReference>
<dbReference type="PDB" id="3Q1J">
    <property type="method" value="X-ray"/>
    <property type="resolution" value="2.35 A"/>
    <property type="chains" value="A=4-69"/>
</dbReference>
<dbReference type="PDB" id="3QII">
    <property type="method" value="X-ray"/>
    <property type="resolution" value="2.30 A"/>
    <property type="chains" value="A=83-150"/>
</dbReference>
<dbReference type="PDB" id="3SD4">
    <property type="method" value="X-ray"/>
    <property type="resolution" value="1.93 A"/>
    <property type="chains" value="A/B=4-69"/>
</dbReference>
<dbReference type="PDB" id="5TAB">
    <property type="method" value="X-ray"/>
    <property type="resolution" value="1.25 A"/>
    <property type="chains" value="A=651-698"/>
</dbReference>
<dbReference type="PDB" id="5TBN">
    <property type="method" value="NMR"/>
    <property type="chains" value="A=646-699"/>
</dbReference>
<dbReference type="PDBsum" id="2LDM"/>
<dbReference type="PDBsum" id="3P8D"/>
<dbReference type="PDBsum" id="3Q1J"/>
<dbReference type="PDBsum" id="3QII"/>
<dbReference type="PDBsum" id="3SD4"/>
<dbReference type="PDBsum" id="5TAB"/>
<dbReference type="PDBsum" id="5TBN"/>
<dbReference type="SMR" id="Q9BVI0"/>
<dbReference type="BioGRID" id="119393">
    <property type="interactions" value="45"/>
</dbReference>
<dbReference type="ComplexPortal" id="CPX-809">
    <property type="entry name" value="NSL histone acetyltransferase complex"/>
</dbReference>
<dbReference type="CORUM" id="Q9BVI0"/>
<dbReference type="FunCoup" id="Q9BVI0">
    <property type="interactions" value="3065"/>
</dbReference>
<dbReference type="IntAct" id="Q9BVI0">
    <property type="interactions" value="17"/>
</dbReference>
<dbReference type="MINT" id="Q9BVI0"/>
<dbReference type="STRING" id="9606.ENSP00000363124"/>
<dbReference type="GlyGen" id="Q9BVI0">
    <property type="glycosylation" value="1 site, 1 O-linked glycan (1 site)"/>
</dbReference>
<dbReference type="iPTMnet" id="Q9BVI0"/>
<dbReference type="PhosphoSitePlus" id="Q9BVI0"/>
<dbReference type="BioMuta" id="PHF20"/>
<dbReference type="DMDM" id="32699605"/>
<dbReference type="jPOST" id="Q9BVI0"/>
<dbReference type="MassIVE" id="Q9BVI0"/>
<dbReference type="PaxDb" id="9606-ENSP00000363124"/>
<dbReference type="PeptideAtlas" id="Q9BVI0"/>
<dbReference type="ProteomicsDB" id="79207">
    <molecule id="Q9BVI0-1"/>
</dbReference>
<dbReference type="ProteomicsDB" id="79208">
    <molecule id="Q9BVI0-2"/>
</dbReference>
<dbReference type="Pumba" id="Q9BVI0"/>
<dbReference type="Antibodypedia" id="26384">
    <property type="antibodies" value="130 antibodies from 25 providers"/>
</dbReference>
<dbReference type="DNASU" id="51230"/>
<dbReference type="Ensembl" id="ENST00000374012.8">
    <molecule id="Q9BVI0-1"/>
    <property type="protein sequence ID" value="ENSP00000363124.3"/>
    <property type="gene ID" value="ENSG00000025293.17"/>
</dbReference>
<dbReference type="GeneID" id="51230"/>
<dbReference type="KEGG" id="hsa:51230"/>
<dbReference type="MANE-Select" id="ENST00000374012.8">
    <property type="protein sequence ID" value="ENSP00000363124.3"/>
    <property type="RefSeq nucleotide sequence ID" value="NM_016436.5"/>
    <property type="RefSeq protein sequence ID" value="NP_057520.2"/>
</dbReference>
<dbReference type="UCSC" id="uc002xek.2">
    <molecule id="Q9BVI0-1"/>
    <property type="organism name" value="human"/>
</dbReference>
<dbReference type="AGR" id="HGNC:16098"/>
<dbReference type="CTD" id="51230"/>
<dbReference type="DisGeNET" id="51230"/>
<dbReference type="GeneCards" id="PHF20"/>
<dbReference type="HGNC" id="HGNC:16098">
    <property type="gene designation" value="PHF20"/>
</dbReference>
<dbReference type="HPA" id="ENSG00000025293">
    <property type="expression patterns" value="Low tissue specificity"/>
</dbReference>
<dbReference type="MIM" id="610335">
    <property type="type" value="gene"/>
</dbReference>
<dbReference type="neXtProt" id="NX_Q9BVI0"/>
<dbReference type="OpenTargets" id="ENSG00000025293"/>
<dbReference type="PharmGKB" id="PA25644"/>
<dbReference type="VEuPathDB" id="HostDB:ENSG00000025293"/>
<dbReference type="eggNOG" id="KOG1844">
    <property type="taxonomic scope" value="Eukaryota"/>
</dbReference>
<dbReference type="GeneTree" id="ENSGT00940000156477"/>
<dbReference type="HOGENOM" id="CLU_012707_0_0_1"/>
<dbReference type="InParanoid" id="Q9BVI0"/>
<dbReference type="OMA" id="HIHVKPF"/>
<dbReference type="OrthoDB" id="161570at2759"/>
<dbReference type="PAN-GO" id="Q9BVI0">
    <property type="GO annotations" value="6 GO annotations based on evolutionary models"/>
</dbReference>
<dbReference type="PhylomeDB" id="Q9BVI0"/>
<dbReference type="TreeFam" id="TF106475"/>
<dbReference type="PathwayCommons" id="Q9BVI0"/>
<dbReference type="Reactome" id="R-HSA-3214847">
    <property type="pathway name" value="HATs acetylate histones"/>
</dbReference>
<dbReference type="Reactome" id="R-HSA-6804757">
    <property type="pathway name" value="Regulation of TP53 Degradation"/>
</dbReference>
<dbReference type="Reactome" id="R-HSA-6804759">
    <property type="pathway name" value="Regulation of TP53 Activity through Association with Co-factors"/>
</dbReference>
<dbReference type="Reactome" id="R-HSA-69541">
    <property type="pathway name" value="Stabilization of p53"/>
</dbReference>
<dbReference type="Reactome" id="R-HSA-9772755">
    <property type="pathway name" value="Formation of WDR5-containing histone-modifying complexes"/>
</dbReference>
<dbReference type="SignaLink" id="Q9BVI0"/>
<dbReference type="SIGNOR" id="Q9BVI0"/>
<dbReference type="BioGRID-ORCS" id="51230">
    <property type="hits" value="40 hits in 1161 CRISPR screens"/>
</dbReference>
<dbReference type="ChiTaRS" id="PHF20">
    <property type="organism name" value="human"/>
</dbReference>
<dbReference type="EvolutionaryTrace" id="Q9BVI0"/>
<dbReference type="GeneWiki" id="PHF20"/>
<dbReference type="GenomeRNAi" id="51230"/>
<dbReference type="Pharos" id="Q9BVI0">
    <property type="development level" value="Tbio"/>
</dbReference>
<dbReference type="PRO" id="PR:Q9BVI0"/>
<dbReference type="Proteomes" id="UP000005640">
    <property type="component" value="Chromosome 20"/>
</dbReference>
<dbReference type="RNAct" id="Q9BVI0">
    <property type="molecule type" value="protein"/>
</dbReference>
<dbReference type="Bgee" id="ENSG00000025293">
    <property type="expression patterns" value="Expressed in endothelial cell and 212 other cell types or tissues"/>
</dbReference>
<dbReference type="ExpressionAtlas" id="Q9BVI0">
    <property type="expression patterns" value="baseline and differential"/>
</dbReference>
<dbReference type="GO" id="GO:0005829">
    <property type="term" value="C:cytosol"/>
    <property type="evidence" value="ECO:0000314"/>
    <property type="project" value="HPA"/>
</dbReference>
<dbReference type="GO" id="GO:0000123">
    <property type="term" value="C:histone acetyltransferase complex"/>
    <property type="evidence" value="ECO:0000314"/>
    <property type="project" value="UniProtKB"/>
</dbReference>
<dbReference type="GO" id="GO:0071339">
    <property type="term" value="C:MLL1 complex"/>
    <property type="evidence" value="ECO:0000314"/>
    <property type="project" value="UniProtKB"/>
</dbReference>
<dbReference type="GO" id="GO:0044545">
    <property type="term" value="C:NSL complex"/>
    <property type="evidence" value="ECO:0000314"/>
    <property type="project" value="ComplexPortal"/>
</dbReference>
<dbReference type="GO" id="GO:0031965">
    <property type="term" value="C:nuclear membrane"/>
    <property type="evidence" value="ECO:0000314"/>
    <property type="project" value="HPA"/>
</dbReference>
<dbReference type="GO" id="GO:0005654">
    <property type="term" value="C:nucleoplasm"/>
    <property type="evidence" value="ECO:0000314"/>
    <property type="project" value="HPA"/>
</dbReference>
<dbReference type="GO" id="GO:0003677">
    <property type="term" value="F:DNA binding"/>
    <property type="evidence" value="ECO:0007669"/>
    <property type="project" value="UniProtKB-KW"/>
</dbReference>
<dbReference type="GO" id="GO:0008270">
    <property type="term" value="F:zinc ion binding"/>
    <property type="evidence" value="ECO:0007669"/>
    <property type="project" value="UniProtKB-KW"/>
</dbReference>
<dbReference type="GO" id="GO:0006325">
    <property type="term" value="P:chromatin organization"/>
    <property type="evidence" value="ECO:0007669"/>
    <property type="project" value="UniProtKB-KW"/>
</dbReference>
<dbReference type="GO" id="GO:0045893">
    <property type="term" value="P:positive regulation of DNA-templated transcription"/>
    <property type="evidence" value="ECO:0000303"/>
    <property type="project" value="ComplexPortal"/>
</dbReference>
<dbReference type="GO" id="GO:0006357">
    <property type="term" value="P:regulation of transcription by RNA polymerase II"/>
    <property type="evidence" value="ECO:0000318"/>
    <property type="project" value="GO_Central"/>
</dbReference>
<dbReference type="CDD" id="cd20104">
    <property type="entry name" value="MBT_PHF20L1-like"/>
    <property type="match status" value="1"/>
</dbReference>
<dbReference type="CDD" id="cd15634">
    <property type="entry name" value="PHD_PHF20"/>
    <property type="match status" value="1"/>
</dbReference>
<dbReference type="CDD" id="cd20453">
    <property type="entry name" value="Tudor_PHF20"/>
    <property type="match status" value="1"/>
</dbReference>
<dbReference type="DisProt" id="DP02427"/>
<dbReference type="FunFam" id="2.30.30.140:FF:000043">
    <property type="entry name" value="PHD finger protein 20 (Predicted)"/>
    <property type="match status" value="1"/>
</dbReference>
<dbReference type="FunFam" id="2.30.30.140:FF:000049">
    <property type="entry name" value="PHD finger protein 20 (Predicted)"/>
    <property type="match status" value="1"/>
</dbReference>
<dbReference type="FunFam" id="3.30.40.10:FF:000196">
    <property type="entry name" value="PHD finger protein 20 (Predicted)"/>
    <property type="match status" value="1"/>
</dbReference>
<dbReference type="Gene3D" id="2.30.30.140">
    <property type="match status" value="2"/>
</dbReference>
<dbReference type="Gene3D" id="3.30.40.10">
    <property type="entry name" value="Zinc/RING finger domain, C3HC4 (zinc finger)"/>
    <property type="match status" value="1"/>
</dbReference>
<dbReference type="InterPro" id="IPR041297">
    <property type="entry name" value="Crb2_Tudor"/>
</dbReference>
<dbReference type="InterPro" id="IPR043449">
    <property type="entry name" value="PHF20-like"/>
</dbReference>
<dbReference type="InterPro" id="IPR022255">
    <property type="entry name" value="PHF20_AT-hook"/>
</dbReference>
<dbReference type="InterPro" id="IPR002999">
    <property type="entry name" value="Tudor"/>
</dbReference>
<dbReference type="InterPro" id="IPR019786">
    <property type="entry name" value="Zinc_finger_PHD-type_CS"/>
</dbReference>
<dbReference type="InterPro" id="IPR013087">
    <property type="entry name" value="Znf_C2H2_type"/>
</dbReference>
<dbReference type="InterPro" id="IPR011011">
    <property type="entry name" value="Znf_FYVE_PHD"/>
</dbReference>
<dbReference type="InterPro" id="IPR001965">
    <property type="entry name" value="Znf_PHD"/>
</dbReference>
<dbReference type="InterPro" id="IPR013083">
    <property type="entry name" value="Znf_RING/FYVE/PHD"/>
</dbReference>
<dbReference type="PANTHER" id="PTHR15856:SF27">
    <property type="entry name" value="PHD FINGER PROTEIN 20"/>
    <property type="match status" value="1"/>
</dbReference>
<dbReference type="PANTHER" id="PTHR15856">
    <property type="entry name" value="PHD FINGER PROTEIN 20-RELATED"/>
    <property type="match status" value="1"/>
</dbReference>
<dbReference type="Pfam" id="PF20826">
    <property type="entry name" value="PHD_5"/>
    <property type="match status" value="1"/>
</dbReference>
<dbReference type="Pfam" id="PF12618">
    <property type="entry name" value="PHF20_AT-hook"/>
    <property type="match status" value="1"/>
</dbReference>
<dbReference type="Pfam" id="PF18115">
    <property type="entry name" value="Tudor_3"/>
    <property type="match status" value="1"/>
</dbReference>
<dbReference type="SMART" id="SM00249">
    <property type="entry name" value="PHD"/>
    <property type="match status" value="1"/>
</dbReference>
<dbReference type="SMART" id="SM00333">
    <property type="entry name" value="TUDOR"/>
    <property type="match status" value="2"/>
</dbReference>
<dbReference type="SUPFAM" id="SSF57903">
    <property type="entry name" value="FYVE/PHD zinc finger"/>
    <property type="match status" value="1"/>
</dbReference>
<dbReference type="SUPFAM" id="SSF63748">
    <property type="entry name" value="Tudor/PWWP/MBT"/>
    <property type="match status" value="2"/>
</dbReference>
<dbReference type="PROSITE" id="PS01359">
    <property type="entry name" value="ZF_PHD_1"/>
    <property type="match status" value="1"/>
</dbReference>
<dbReference type="PROSITE" id="PS00028">
    <property type="entry name" value="ZINC_FINGER_C2H2_1"/>
    <property type="match status" value="1"/>
</dbReference>
<dbReference type="PROSITE" id="PS50157">
    <property type="entry name" value="ZINC_FINGER_C2H2_2"/>
    <property type="match status" value="1"/>
</dbReference>
<protein>
    <recommendedName>
        <fullName>PHD finger protein 20</fullName>
    </recommendedName>
    <alternativeName>
        <fullName>Glioma-expressed antigen 2</fullName>
    </alternativeName>
    <alternativeName>
        <fullName>Hepatocellular carcinoma-associated antigen 58</fullName>
    </alternativeName>
    <alternativeName>
        <fullName>Novel zinc finger protein</fullName>
    </alternativeName>
    <alternativeName>
        <fullName>Transcription factor TZP</fullName>
    </alternativeName>
</protein>
<name>PHF20_HUMAN</name>
<organism>
    <name type="scientific">Homo sapiens</name>
    <name type="common">Human</name>
    <dbReference type="NCBI Taxonomy" id="9606"/>
    <lineage>
        <taxon>Eukaryota</taxon>
        <taxon>Metazoa</taxon>
        <taxon>Chordata</taxon>
        <taxon>Craniata</taxon>
        <taxon>Vertebrata</taxon>
        <taxon>Euteleostomi</taxon>
        <taxon>Mammalia</taxon>
        <taxon>Eutheria</taxon>
        <taxon>Euarchontoglires</taxon>
        <taxon>Primates</taxon>
        <taxon>Haplorrhini</taxon>
        <taxon>Catarrhini</taxon>
        <taxon>Hominidae</taxon>
        <taxon>Homo</taxon>
    </lineage>
</organism>
<reference key="1">
    <citation type="journal article" date="2002" name="J. Immunol.">
        <title>Large scale identification of human hepatocellular carcinoma-associated antigens by autoantibodies.</title>
        <authorList>
            <person name="Wang Y."/>
            <person name="Han K.-J."/>
            <person name="Pang X.-W."/>
            <person name="Vaughan H.A."/>
            <person name="Qu W."/>
            <person name="Dong X.-Y."/>
            <person name="Peng J.-R."/>
            <person name="Zhao H.-T."/>
            <person name="Rui J.-A."/>
            <person name="Leng X.-S."/>
            <person name="Cebon J."/>
            <person name="Burgess A.W."/>
            <person name="Chen W.-F."/>
        </authorList>
    </citation>
    <scope>NUCLEOTIDE SEQUENCE [MRNA] (ISOFORM 2)</scope>
    <scope>TISSUE SPECIFICITY</scope>
    <scope>IDENTIFICATION AS ANTIGEN IN HEPATOCELLULAR CARCINOMA</scope>
    <source>
        <tissue>Hepatoma</tissue>
    </source>
</reference>
<reference key="2">
    <citation type="submission" date="2001-02" db="EMBL/GenBank/DDBJ databases">
        <title>Cloning and characterization of a novel transcription factor (TZP).</title>
        <authorList>
            <person name="Cheng J.Q."/>
            <person name="Kaneko S."/>
            <person name="Dan H.C."/>
            <person name="Testa J.R."/>
        </authorList>
    </citation>
    <scope>NUCLEOTIDE SEQUENCE [MRNA] (ISOFORM 1)</scope>
</reference>
<reference key="3">
    <citation type="journal article" date="2004" name="Nat. Genet.">
        <title>Complete sequencing and characterization of 21,243 full-length human cDNAs.</title>
        <authorList>
            <person name="Ota T."/>
            <person name="Suzuki Y."/>
            <person name="Nishikawa T."/>
            <person name="Otsuki T."/>
            <person name="Sugiyama T."/>
            <person name="Irie R."/>
            <person name="Wakamatsu A."/>
            <person name="Hayashi K."/>
            <person name="Sato H."/>
            <person name="Nagai K."/>
            <person name="Kimura K."/>
            <person name="Makita H."/>
            <person name="Sekine M."/>
            <person name="Obayashi M."/>
            <person name="Nishi T."/>
            <person name="Shibahara T."/>
            <person name="Tanaka T."/>
            <person name="Ishii S."/>
            <person name="Yamamoto J."/>
            <person name="Saito K."/>
            <person name="Kawai Y."/>
            <person name="Isono Y."/>
            <person name="Nakamura Y."/>
            <person name="Nagahari K."/>
            <person name="Murakami K."/>
            <person name="Yasuda T."/>
            <person name="Iwayanagi T."/>
            <person name="Wagatsuma M."/>
            <person name="Shiratori A."/>
            <person name="Sudo H."/>
            <person name="Hosoiri T."/>
            <person name="Kaku Y."/>
            <person name="Kodaira H."/>
            <person name="Kondo H."/>
            <person name="Sugawara M."/>
            <person name="Takahashi M."/>
            <person name="Kanda K."/>
            <person name="Yokoi T."/>
            <person name="Furuya T."/>
            <person name="Kikkawa E."/>
            <person name="Omura Y."/>
            <person name="Abe K."/>
            <person name="Kamihara K."/>
            <person name="Katsuta N."/>
            <person name="Sato K."/>
            <person name="Tanikawa M."/>
            <person name="Yamazaki M."/>
            <person name="Ninomiya K."/>
            <person name="Ishibashi T."/>
            <person name="Yamashita H."/>
            <person name="Murakawa K."/>
            <person name="Fujimori K."/>
            <person name="Tanai H."/>
            <person name="Kimata M."/>
            <person name="Watanabe M."/>
            <person name="Hiraoka S."/>
            <person name="Chiba Y."/>
            <person name="Ishida S."/>
            <person name="Ono Y."/>
            <person name="Takiguchi S."/>
            <person name="Watanabe S."/>
            <person name="Yosida M."/>
            <person name="Hotuta T."/>
            <person name="Kusano J."/>
            <person name="Kanehori K."/>
            <person name="Takahashi-Fujii A."/>
            <person name="Hara H."/>
            <person name="Tanase T.-O."/>
            <person name="Nomura Y."/>
            <person name="Togiya S."/>
            <person name="Komai F."/>
            <person name="Hara R."/>
            <person name="Takeuchi K."/>
            <person name="Arita M."/>
            <person name="Imose N."/>
            <person name="Musashino K."/>
            <person name="Yuuki H."/>
            <person name="Oshima A."/>
            <person name="Sasaki N."/>
            <person name="Aotsuka S."/>
            <person name="Yoshikawa Y."/>
            <person name="Matsunawa H."/>
            <person name="Ichihara T."/>
            <person name="Shiohata N."/>
            <person name="Sano S."/>
            <person name="Moriya S."/>
            <person name="Momiyama H."/>
            <person name="Satoh N."/>
            <person name="Takami S."/>
            <person name="Terashima Y."/>
            <person name="Suzuki O."/>
            <person name="Nakagawa S."/>
            <person name="Senoh A."/>
            <person name="Mizoguchi H."/>
            <person name="Goto Y."/>
            <person name="Shimizu F."/>
            <person name="Wakebe H."/>
            <person name="Hishigaki H."/>
            <person name="Watanabe T."/>
            <person name="Sugiyama A."/>
            <person name="Takemoto M."/>
            <person name="Kawakami B."/>
            <person name="Yamazaki M."/>
            <person name="Watanabe K."/>
            <person name="Kumagai A."/>
            <person name="Itakura S."/>
            <person name="Fukuzumi Y."/>
            <person name="Fujimori Y."/>
            <person name="Komiyama M."/>
            <person name="Tashiro H."/>
            <person name="Tanigami A."/>
            <person name="Fujiwara T."/>
            <person name="Ono T."/>
            <person name="Yamada K."/>
            <person name="Fujii Y."/>
            <person name="Ozaki K."/>
            <person name="Hirao M."/>
            <person name="Ohmori Y."/>
            <person name="Kawabata A."/>
            <person name="Hikiji T."/>
            <person name="Kobatake N."/>
            <person name="Inagaki H."/>
            <person name="Ikema Y."/>
            <person name="Okamoto S."/>
            <person name="Okitani R."/>
            <person name="Kawakami T."/>
            <person name="Noguchi S."/>
            <person name="Itoh T."/>
            <person name="Shigeta K."/>
            <person name="Senba T."/>
            <person name="Matsumura K."/>
            <person name="Nakajima Y."/>
            <person name="Mizuno T."/>
            <person name="Morinaga M."/>
            <person name="Sasaki M."/>
            <person name="Togashi T."/>
            <person name="Oyama M."/>
            <person name="Hata H."/>
            <person name="Watanabe M."/>
            <person name="Komatsu T."/>
            <person name="Mizushima-Sugano J."/>
            <person name="Satoh T."/>
            <person name="Shirai Y."/>
            <person name="Takahashi Y."/>
            <person name="Nakagawa K."/>
            <person name="Okumura K."/>
            <person name="Nagase T."/>
            <person name="Nomura N."/>
            <person name="Kikuchi H."/>
            <person name="Masuho Y."/>
            <person name="Yamashita R."/>
            <person name="Nakai K."/>
            <person name="Yada T."/>
            <person name="Nakamura Y."/>
            <person name="Ohara O."/>
            <person name="Isogai T."/>
            <person name="Sugano S."/>
        </authorList>
    </citation>
    <scope>NUCLEOTIDE SEQUENCE [LARGE SCALE MRNA]</scope>
    <source>
        <tissue>Trachea</tissue>
    </source>
</reference>
<reference key="4">
    <citation type="journal article" date="2001" name="Nature">
        <title>The DNA sequence and comparative analysis of human chromosome 20.</title>
        <authorList>
            <person name="Deloukas P."/>
            <person name="Matthews L.H."/>
            <person name="Ashurst J.L."/>
            <person name="Burton J."/>
            <person name="Gilbert J.G.R."/>
            <person name="Jones M."/>
            <person name="Stavrides G."/>
            <person name="Almeida J.P."/>
            <person name="Babbage A.K."/>
            <person name="Bagguley C.L."/>
            <person name="Bailey J."/>
            <person name="Barlow K.F."/>
            <person name="Bates K.N."/>
            <person name="Beard L.M."/>
            <person name="Beare D.M."/>
            <person name="Beasley O.P."/>
            <person name="Bird C.P."/>
            <person name="Blakey S.E."/>
            <person name="Bridgeman A.M."/>
            <person name="Brown A.J."/>
            <person name="Buck D."/>
            <person name="Burrill W.D."/>
            <person name="Butler A.P."/>
            <person name="Carder C."/>
            <person name="Carter N.P."/>
            <person name="Chapman J.C."/>
            <person name="Clamp M."/>
            <person name="Clark G."/>
            <person name="Clark L.N."/>
            <person name="Clark S.Y."/>
            <person name="Clee C.M."/>
            <person name="Clegg S."/>
            <person name="Cobley V.E."/>
            <person name="Collier R.E."/>
            <person name="Connor R.E."/>
            <person name="Corby N.R."/>
            <person name="Coulson A."/>
            <person name="Coville G.J."/>
            <person name="Deadman R."/>
            <person name="Dhami P.D."/>
            <person name="Dunn M."/>
            <person name="Ellington A.G."/>
            <person name="Frankland J.A."/>
            <person name="Fraser A."/>
            <person name="French L."/>
            <person name="Garner P."/>
            <person name="Grafham D.V."/>
            <person name="Griffiths C."/>
            <person name="Griffiths M.N.D."/>
            <person name="Gwilliam R."/>
            <person name="Hall R.E."/>
            <person name="Hammond S."/>
            <person name="Harley J.L."/>
            <person name="Heath P.D."/>
            <person name="Ho S."/>
            <person name="Holden J.L."/>
            <person name="Howden P.J."/>
            <person name="Huckle E."/>
            <person name="Hunt A.R."/>
            <person name="Hunt S.E."/>
            <person name="Jekosch K."/>
            <person name="Johnson C.M."/>
            <person name="Johnson D."/>
            <person name="Kay M.P."/>
            <person name="Kimberley A.M."/>
            <person name="King A."/>
            <person name="Knights A."/>
            <person name="Laird G.K."/>
            <person name="Lawlor S."/>
            <person name="Lehvaeslaiho M.H."/>
            <person name="Leversha M.A."/>
            <person name="Lloyd C."/>
            <person name="Lloyd D.M."/>
            <person name="Lovell J.D."/>
            <person name="Marsh V.L."/>
            <person name="Martin S.L."/>
            <person name="McConnachie L.J."/>
            <person name="McLay K."/>
            <person name="McMurray A.A."/>
            <person name="Milne S.A."/>
            <person name="Mistry D."/>
            <person name="Moore M.J.F."/>
            <person name="Mullikin J.C."/>
            <person name="Nickerson T."/>
            <person name="Oliver K."/>
            <person name="Parker A."/>
            <person name="Patel R."/>
            <person name="Pearce T.A.V."/>
            <person name="Peck A.I."/>
            <person name="Phillimore B.J.C.T."/>
            <person name="Prathalingam S.R."/>
            <person name="Plumb R.W."/>
            <person name="Ramsay H."/>
            <person name="Rice C.M."/>
            <person name="Ross M.T."/>
            <person name="Scott C.E."/>
            <person name="Sehra H.K."/>
            <person name="Shownkeen R."/>
            <person name="Sims S."/>
            <person name="Skuce C.D."/>
            <person name="Smith M.L."/>
            <person name="Soderlund C."/>
            <person name="Steward C.A."/>
            <person name="Sulston J.E."/>
            <person name="Swann R.M."/>
            <person name="Sycamore N."/>
            <person name="Taylor R."/>
            <person name="Tee L."/>
            <person name="Thomas D.W."/>
            <person name="Thorpe A."/>
            <person name="Tracey A."/>
            <person name="Tromans A.C."/>
            <person name="Vaudin M."/>
            <person name="Wall M."/>
            <person name="Wallis J.M."/>
            <person name="Whitehead S.L."/>
            <person name="Whittaker P."/>
            <person name="Willey D.L."/>
            <person name="Williams L."/>
            <person name="Williams S.A."/>
            <person name="Wilming L."/>
            <person name="Wray P.W."/>
            <person name="Hubbard T."/>
            <person name="Durbin R.M."/>
            <person name="Bentley D.R."/>
            <person name="Beck S."/>
            <person name="Rogers J."/>
        </authorList>
    </citation>
    <scope>NUCLEOTIDE SEQUENCE [LARGE SCALE GENOMIC DNA]</scope>
</reference>
<reference key="5">
    <citation type="submission" date="2005-09" db="EMBL/GenBank/DDBJ databases">
        <authorList>
            <person name="Mural R.J."/>
            <person name="Istrail S."/>
            <person name="Sutton G.G."/>
            <person name="Florea L."/>
            <person name="Halpern A.L."/>
            <person name="Mobarry C.M."/>
            <person name="Lippert R."/>
            <person name="Walenz B."/>
            <person name="Shatkay H."/>
            <person name="Dew I."/>
            <person name="Miller J.R."/>
            <person name="Flanigan M.J."/>
            <person name="Edwards N.J."/>
            <person name="Bolanos R."/>
            <person name="Fasulo D."/>
            <person name="Halldorsson B.V."/>
            <person name="Hannenhalli S."/>
            <person name="Turner R."/>
            <person name="Yooseph S."/>
            <person name="Lu F."/>
            <person name="Nusskern D.R."/>
            <person name="Shue B.C."/>
            <person name="Zheng X.H."/>
            <person name="Zhong F."/>
            <person name="Delcher A.L."/>
            <person name="Huson D.H."/>
            <person name="Kravitz S.A."/>
            <person name="Mouchard L."/>
            <person name="Reinert K."/>
            <person name="Remington K.A."/>
            <person name="Clark A.G."/>
            <person name="Waterman M.S."/>
            <person name="Eichler E.E."/>
            <person name="Adams M.D."/>
            <person name="Hunkapiller M.W."/>
            <person name="Myers E.W."/>
            <person name="Venter J.C."/>
        </authorList>
    </citation>
    <scope>NUCLEOTIDE SEQUENCE [LARGE SCALE GENOMIC DNA]</scope>
</reference>
<reference key="6">
    <citation type="journal article" date="2004" name="Genome Res.">
        <title>The status, quality, and expansion of the NIH full-length cDNA project: the Mammalian Gene Collection (MGC).</title>
        <authorList>
            <consortium name="The MGC Project Team"/>
        </authorList>
    </citation>
    <scope>NUCLEOTIDE SEQUENCE [LARGE SCALE MRNA] (ISOFORM 1)</scope>
    <scope>VARIANT MET-605</scope>
    <source>
        <tissue>Brain</tissue>
        <tissue>Eye</tissue>
        <tissue>Lymph</tissue>
    </source>
</reference>
<reference key="7">
    <citation type="journal article" date="2001" name="Clin. Exp. Immunol.">
        <title>Glioma-expressed antigen 2 (GLEA2): a novel protein that can elicit immune responses in glioblastoma patients and some controls.</title>
        <authorList>
            <person name="Fischer U."/>
            <person name="Struss A.-K."/>
            <person name="Hemmer D."/>
            <person name="Pallasch C.P."/>
            <person name="Steudel W.-I."/>
            <person name="Meese E."/>
        </authorList>
    </citation>
    <scope>NUCLEOTIDE SEQUENCE [MRNA] OF 1-543 (ISOFORM 1)</scope>
    <scope>IDENTIFICATION AS ANTIGEN IN GLIOBLASTOMA</scope>
    <source>
        <tissue>Glioblastoma</tissue>
    </source>
</reference>
<reference key="8">
    <citation type="journal article" date="2003" name="Int. J. Cancer">
        <title>Novel tumor antigens identified by autologous antibody screening of childhood medulloblastoma cDNA libraries.</title>
        <authorList>
            <person name="Behrends U."/>
            <person name="Schneider I."/>
            <person name="Roessler S."/>
            <person name="Frauenknecht H."/>
            <person name="Golbeck A."/>
            <person name="Lechner B."/>
            <person name="Eigenstetter G."/>
            <person name="Zobywalski C."/>
            <person name="Mueller-Weihrich S."/>
            <person name="Graubner U."/>
            <person name="Schmid I."/>
            <person name="Sackerer D."/>
            <person name="Spaeth M."/>
            <person name="Goetz C."/>
            <person name="Prantl F."/>
            <person name="Asmuss H.-P."/>
            <person name="Bise K."/>
            <person name="Mautner J."/>
        </authorList>
    </citation>
    <scope>IDENTIFICATION AS ANTIGEN IN CHILDHOOD MEDULLOBLASTOMA</scope>
</reference>
<reference key="9">
    <citation type="journal article" date="2005" name="Cell">
        <title>Physical association and coordinate function of the H3 K4 methyltransferase MLL1 and the H4 K16 acetyltransferase MOF.</title>
        <authorList>
            <person name="Dou Y."/>
            <person name="Milne T.A."/>
            <person name="Tackett A.J."/>
            <person name="Smith E.R."/>
            <person name="Fukuda A."/>
            <person name="Wysocka J."/>
            <person name="Allis C.D."/>
            <person name="Chait B.T."/>
            <person name="Hess J.L."/>
            <person name="Roeder R.G."/>
        </authorList>
    </citation>
    <scope>IDENTIFICATION IN THE MLL1/MLL COMPLEX</scope>
</reference>
<reference key="10">
    <citation type="journal article" date="2008" name="Proc. Natl. Acad. Sci. U.S.A.">
        <title>A quantitative atlas of mitotic phosphorylation.</title>
        <authorList>
            <person name="Dephoure N."/>
            <person name="Zhou C."/>
            <person name="Villen J."/>
            <person name="Beausoleil S.A."/>
            <person name="Bakalarski C.E."/>
            <person name="Elledge S.J."/>
            <person name="Gygi S.P."/>
        </authorList>
    </citation>
    <scope>PHOSPHORYLATION [LARGE SCALE ANALYSIS] AT SER-878 AND SER-880</scope>
    <scope>IDENTIFICATION BY MASS SPECTROMETRY [LARGE SCALE ANALYSIS]</scope>
    <source>
        <tissue>Cervix carcinoma</tissue>
    </source>
</reference>
<reference key="11">
    <citation type="journal article" date="2009" name="Sci. Signal.">
        <title>Quantitative phosphoproteomic analysis of T cell receptor signaling reveals system-wide modulation of protein-protein interactions.</title>
        <authorList>
            <person name="Mayya V."/>
            <person name="Lundgren D.H."/>
            <person name="Hwang S.-I."/>
            <person name="Rezaul K."/>
            <person name="Wu L."/>
            <person name="Eng J.K."/>
            <person name="Rodionov V."/>
            <person name="Han D.K."/>
        </authorList>
    </citation>
    <scope>PHOSPHORYLATION [LARGE SCALE ANALYSIS] AT SER-878 AND SER-880</scope>
    <scope>IDENTIFICATION BY MASS SPECTROMETRY [LARGE SCALE ANALYSIS]</scope>
    <source>
        <tissue>Leukemic T-cell</tissue>
    </source>
</reference>
<reference key="12">
    <citation type="journal article" date="2009" name="Science">
        <title>Lysine acetylation targets protein complexes and co-regulates major cellular functions.</title>
        <authorList>
            <person name="Choudhary C."/>
            <person name="Kumar C."/>
            <person name="Gnad F."/>
            <person name="Nielsen M.L."/>
            <person name="Rehman M."/>
            <person name="Walther T.C."/>
            <person name="Olsen J.V."/>
            <person name="Mann M."/>
        </authorList>
    </citation>
    <scope>ACETYLATION [LARGE SCALE ANALYSIS] AT LYS-843</scope>
    <scope>IDENTIFICATION BY MASS SPECTROMETRY [LARGE SCALE ANALYSIS]</scope>
</reference>
<reference key="13">
    <citation type="journal article" date="2010" name="J. Biol. Chem.">
        <title>Subunit composition and substrate specificity of a MOF-containing histone acetyltransferase distinct from the male-specific lethal (MSL) complex.</title>
        <authorList>
            <person name="Cai Y."/>
            <person name="Jin J."/>
            <person name="Swanson S.K."/>
            <person name="Cole M.D."/>
            <person name="Choi S.H."/>
            <person name="Florens L."/>
            <person name="Washburn M.P."/>
            <person name="Conaway J.W."/>
            <person name="Conaway R.C."/>
        </authorList>
    </citation>
    <scope>FUNCTION IN HISTONE H4 ACETYLATION</scope>
    <scope>IDENTIFICATION IN NSL COMPLEX</scope>
    <scope>SUBCELLULAR LOCATION</scope>
</reference>
<reference key="14">
    <citation type="journal article" date="2010" name="Sci. Signal.">
        <title>Quantitative phosphoproteomics reveals widespread full phosphorylation site occupancy during mitosis.</title>
        <authorList>
            <person name="Olsen J.V."/>
            <person name="Vermeulen M."/>
            <person name="Santamaria A."/>
            <person name="Kumar C."/>
            <person name="Miller M.L."/>
            <person name="Jensen L.J."/>
            <person name="Gnad F."/>
            <person name="Cox J."/>
            <person name="Jensen T.S."/>
            <person name="Nigg E.A."/>
            <person name="Brunak S."/>
            <person name="Mann M."/>
        </authorList>
    </citation>
    <scope>IDENTIFICATION BY MASS SPECTROMETRY [LARGE SCALE ANALYSIS]</scope>
    <source>
        <tissue>Cervix carcinoma</tissue>
    </source>
</reference>
<reference key="15">
    <citation type="journal article" date="2011" name="Sci. Signal.">
        <title>System-wide temporal characterization of the proteome and phosphoproteome of human embryonic stem cell differentiation.</title>
        <authorList>
            <person name="Rigbolt K.T."/>
            <person name="Prokhorova T.A."/>
            <person name="Akimov V."/>
            <person name="Henningsen J."/>
            <person name="Johansen P.T."/>
            <person name="Kratchmarova I."/>
            <person name="Kassem M."/>
            <person name="Mann M."/>
            <person name="Olsen J.V."/>
            <person name="Blagoev B."/>
        </authorList>
    </citation>
    <scope>PHOSPHORYLATION [LARGE SCALE ANALYSIS] AT SER-159</scope>
    <scope>IDENTIFICATION BY MASS SPECTROMETRY [LARGE SCALE ANALYSIS]</scope>
</reference>
<reference key="16">
    <citation type="journal article" date="2013" name="Cell">
        <title>Jmjd3 inhibits reprogramming by upregulating expression of INK4a/Arf and targeting PHF20 for ubiquitination.</title>
        <authorList>
            <person name="Zhao W."/>
            <person name="Li Q."/>
            <person name="Ayers S."/>
            <person name="Gu Y."/>
            <person name="Shi Z."/>
            <person name="Zhu Q."/>
            <person name="Chen Y."/>
            <person name="Wang H.Y."/>
            <person name="Wang R.F."/>
        </authorList>
    </citation>
    <scope>UBIQUITINATION BY TRIM26</scope>
</reference>
<reference key="17">
    <citation type="journal article" date="2013" name="J. Proteome Res.">
        <title>Toward a comprehensive characterization of a human cancer cell phosphoproteome.</title>
        <authorList>
            <person name="Zhou H."/>
            <person name="Di Palma S."/>
            <person name="Preisinger C."/>
            <person name="Peng M."/>
            <person name="Polat A.N."/>
            <person name="Heck A.J."/>
            <person name="Mohammed S."/>
        </authorList>
    </citation>
    <scope>PHOSPHORYLATION [LARGE SCALE ANALYSIS] AT SER-488</scope>
    <scope>IDENTIFICATION BY MASS SPECTROMETRY [LARGE SCALE ANALYSIS]</scope>
    <source>
        <tissue>Cervix carcinoma</tissue>
        <tissue>Erythroleukemia</tissue>
    </source>
</reference>
<reference key="18">
    <citation type="journal article" date="2012" name="FEBS Lett.">
        <title>Crystal structures of the Tudor domains of human PHF20 reveal novel structural variations on the Royal Family of proteins.</title>
        <authorList>
            <person name="Adams-Cioaba M.A."/>
            <person name="Li Z."/>
            <person name="Tempel W."/>
            <person name="Guo Y."/>
            <person name="Bian C."/>
            <person name="Li Y."/>
            <person name="Lam R."/>
            <person name="Min J."/>
        </authorList>
    </citation>
    <scope>X-RAY CRYSTALLOGRAPHY (2.3 ANGSTROMS) OF 4-69 AND 84-147 AND TUDOR DOMAINS</scope>
</reference>
<reference key="19">
    <citation type="journal article" date="2012" name="Nat. Struct. Mol. Biol.">
        <title>PHF20 is an effector protein of p53 double lysine methylation that stabilizes and activates p53.</title>
        <authorList>
            <person name="Cui G."/>
            <person name="Park S."/>
            <person name="Badeaux A.I."/>
            <person name="Kim D."/>
            <person name="Lee J."/>
            <person name="Thompson J.R."/>
            <person name="Yan F."/>
            <person name="Kaneko S."/>
            <person name="Yuan Z."/>
            <person name="Botuyan M.V."/>
            <person name="Bedford M.T."/>
            <person name="Cheng J.Q."/>
            <person name="Mer G."/>
        </authorList>
    </citation>
    <scope>X-RAY CRYSTALLOGRAPHY (2.0 ANGSTROMS) OF 4-69 AND 84-147</scope>
    <scope>STRUCTURE BY NMR OF 84-147 IN COMPLEX WITH DIMETHYLATED P53 PEPTIDE</scope>
    <scope>FUNCTION</scope>
    <scope>SUBUNIT</scope>
    <scope>DISULFIDE BONDS</scope>
    <scope>MUTAGENESIS OF CYS-96; TRP-97; CYS-100 AND TYR-103</scope>
</reference>
<comment type="function">
    <text evidence="1 7 8">Methyllysine-binding protein, component of the MOF histone acetyltransferase protein complex. Not required for maintaining the global histone H4 'Lys-16' acetylation (H4K16ac) levels or locus specific histone acetylation, but instead works downstream in transcriptional regulation of MOF target genes (By similarity). As part of the NSL complex it may be involved in acetylation of nucleosomal histone H4 on several lysine residues. Contributes to methyllysine-dependent p53/TP53 stabilization and up-regulation after DNA damage.</text>
</comment>
<comment type="subunit">
    <text evidence="6 7 8">Homodimer; disulfide-linked. Component of some MLL1/MLL complex, at least composed of the core components KMT2A/MLL1, ASH2L, HCFC1, WDR5 and RBBP5, as well as the facultative components BACC1, CHD8, E2F6, HSP70, INO80C, KANSL1, LAS1L, MAX, MCRS1, MGA, KAT8/MOF, PELP1, PHF20, PRP31, RING2, RUVB1/TIP49A, RUVB2/TIP49B, SENP3, TAF1, TAF4, TAF6, TAF7, TAF9 and TEX10. Component of the NSL complex at least composed of MOF/KAT8, KANSL1, KANSL2, KANSL3, MCRS1, PHF20, OGT1/OGT, WDR5 and HCFC1.</text>
</comment>
<comment type="interaction">
    <interactant intactId="EBI-2560802">
        <id>Q9BVI0</id>
    </interactant>
    <interactant intactId="EBI-79722">
        <id>P68431</id>
        <label>H3C12</label>
    </interactant>
    <organismsDiffer>false</organismsDiffer>
    <experiments>6</experiments>
</comment>
<comment type="interaction">
    <interactant intactId="EBI-2560802">
        <id>Q9BVI0</id>
    </interactant>
    <interactant intactId="EBI-302023">
        <id>P62805</id>
        <label>H4C9</label>
    </interactant>
    <organismsDiffer>false</organismsDiffer>
    <experiments>3</experiments>
</comment>
<comment type="interaction">
    <interactant intactId="EBI-2560802">
        <id>Q9BVI0</id>
    </interactant>
    <interactant intactId="EBI-395317">
        <id>Q9P2N6</id>
        <label>KANSL3</label>
    </interactant>
    <organismsDiffer>false</organismsDiffer>
    <experiments>2</experiments>
</comment>
<comment type="subcellular location">
    <subcellularLocation>
        <location evidence="7">Nucleus</location>
    </subcellularLocation>
</comment>
<comment type="alternative products">
    <event type="alternative splicing"/>
    <isoform>
        <id>Q9BVI0-1</id>
        <name>1</name>
        <sequence type="displayed"/>
    </isoform>
    <isoform>
        <id>Q9BVI0-2</id>
        <name>2</name>
        <sequence type="described" ref="VSP_007760 VSP_007761"/>
    </isoform>
</comment>
<comment type="tissue specificity">
    <text evidence="4">Expressed in heart, kidney, liver, lung, pancreas, placenta, spleen and testis. Not expressed in brain, skeletal muscle, colon, ovary, prostate, small intestine and thymus. Expressed in colon and ovary cancer cell lines while it is not expressed in the respective normal tissues.</text>
</comment>
<comment type="domain">
    <text>The Tudor domain 2 mediates reading of dimethyl-lysine residues.</text>
</comment>
<comment type="domain">
    <text>The Tudor domain 1 doesn't bind dimethyl-lysine residues, due to an atypical and occluded aromatic cage.</text>
</comment>
<comment type="PTM">
    <text evidence="9">Ubiquitinated by TRIM26; leading to proteasomal degradation.</text>
</comment>
<comment type="miscellaneous">
    <text>Antibodies against PHF20 are present in sera from patients with hepatocellular carcinoma, glioblastoma and childhood medulloblastula.</text>
</comment>
<comment type="sequence caution" evidence="11">
    <conflict type="frameshift">
        <sequence resource="EMBL-CDS" id="AAF34184"/>
    </conflict>
</comment>
<comment type="sequence caution" evidence="11">
    <conflict type="frameshift">
        <sequence resource="EMBL-CDS" id="AAK19748"/>
    </conflict>
</comment>
<gene>
    <name type="primary">PHF20</name>
    <name type="synonym">C20orf104</name>
    <name type="synonym">GLEA2</name>
    <name type="synonym">HCA58</name>
    <name type="synonym">NZF</name>
    <name type="synonym">TZP</name>
</gene>
<keyword id="KW-0002">3D-structure</keyword>
<keyword id="KW-0007">Acetylation</keyword>
<keyword id="KW-0025">Alternative splicing</keyword>
<keyword id="KW-0156">Chromatin regulator</keyword>
<keyword id="KW-1015">Disulfide bond</keyword>
<keyword id="KW-0238">DNA-binding</keyword>
<keyword id="KW-0479">Metal-binding</keyword>
<keyword id="KW-0539">Nucleus</keyword>
<keyword id="KW-0597">Phosphoprotein</keyword>
<keyword id="KW-1267">Proteomics identification</keyword>
<keyword id="KW-1185">Reference proteome</keyword>
<keyword id="KW-0677">Repeat</keyword>
<keyword id="KW-0804">Transcription</keyword>
<keyword id="KW-0805">Transcription regulation</keyword>
<keyword id="KW-0832">Ubl conjugation</keyword>
<keyword id="KW-0862">Zinc</keyword>
<keyword id="KW-0863">Zinc-finger</keyword>
<sequence>MTKHPPNRRGISFEVGAQLEARDRLKNWYPAHIEDIDYEEGKVLIHFKRWNHRYDEWFCWDSPYLRPLEKIQLRKEGLHEEDGSSEFQINEQVLACWSDCRFYPAKVTAVNKDGTYTVKFYDGVVQTVKHIHVKAFSKDQNIVGNARPKETDHKSLSSSPDKREKFKEQRKATVNVKKDKEDKPLKTEKRPKQPDKEGKLICSEKGKVSEKSLPKNEKEDKENISENDREYSGDAQVDKKPENDIVKSPQENLREPKRKRGRPPSIAPTAVDSNSQTLQPITLELRRRKISKGCEVPLKRPRLDKNSSQEKSKNYSENTDKDLSRRRSSRLSTNGTHEILDPDLVVSDLVDTDPLQDTLSSTKESEEGQLKSALEAGQVSSALTCHSFGDGSGAAGLELNCPSMGENTMKTEPTSPLVELQEISTVEVTNTFKKTDDFGSSNAPAVDLDHKFRCKVVDCLKFFRKAKLLHYHMKYFHGMEKSLEPEESPGKRHVQTRGPSASDKPSQETLTRKRVSASSPTTKDKEKNKEKKFKEFVRVKPKKKKKKKKKTKPECPCSEEISDTSQEPSPPKAFAVTRCGSSHKPGVHMSPQLHGPESGHHKGKVKALEEDNLSESSSESFLWSDDEYGQDVDVTTNPDEELDGDDRYDFEVVRCICEVQEENDFMIQCEECQCWQHGVCMGLLEENVPEKYTCYVCQDPPGQRPGFKYWYDKEWLSRGHMHGLAFLEENYSHQNAKKIVATHQLLGDVQRVIEVLHGLQLKMSILQSREHPDLPLWCQPWKQHSGEGRSHFRNIPVTDTRSKEEAPSYRTLNGAVEKPRPLALPLPRSVEESYITSEHCYQKPRAYYPAVEQKLVVETRGSALDDAVNPLHENGDDSLSPRLGWPLDQDRSKGDSDPKPGSPKVKEYVSKKALPEEAPARKLLDRGGEGLLSSQHQWQFNLLTHVESLQDEVTHRMDSIEKELDVLESWLDYTGELEPPEPLARLPQLKHCIKQLLMDLGKVQQIALCCST</sequence>
<accession>Q9BVI0</accession>
<accession>A7E235</accession>
<accession>B2RB56</accession>
<accession>E1P5S3</accession>
<accession>Q566Q2</accession>
<accession>Q5JWY9</accession>
<accession>Q66K49</accession>
<accession>Q9BWV4</accession>
<accession>Q9BXA3</accession>
<accession>Q9BZW3</accession>
<accession>Q9H421</accession>
<accession>Q9H4J6</accession>
<accession>Q9NZ22</accession>
<feature type="chain" id="PRO_0000059310" description="PHD finger protein 20">
    <location>
        <begin position="1"/>
        <end position="1012"/>
    </location>
</feature>
<feature type="domain" description="Tudor 1">
    <location>
        <begin position="4"/>
        <end position="69"/>
    </location>
</feature>
<feature type="domain" description="Tudor 2">
    <location>
        <begin position="83"/>
        <end position="147"/>
    </location>
</feature>
<feature type="DNA-binding region" description="A.T hook">
    <location>
        <begin position="257"/>
        <end position="269"/>
    </location>
</feature>
<feature type="zinc finger region" description="C2H2-type" evidence="2">
    <location>
        <begin position="452"/>
        <end position="477"/>
    </location>
</feature>
<feature type="zinc finger region" description="PHD-type">
    <location>
        <begin position="654"/>
        <end position="700"/>
    </location>
</feature>
<feature type="region of interest" description="Disordered" evidence="3">
    <location>
        <begin position="142"/>
        <end position="336"/>
    </location>
</feature>
<feature type="region of interest" description="Disordered" evidence="3">
    <location>
        <begin position="481"/>
        <end position="611"/>
    </location>
</feature>
<feature type="region of interest" description="Disordered" evidence="3">
    <location>
        <begin position="866"/>
        <end position="912"/>
    </location>
</feature>
<feature type="compositionally biased region" description="Basic and acidic residues" evidence="3">
    <location>
        <begin position="147"/>
        <end position="245"/>
    </location>
</feature>
<feature type="compositionally biased region" description="Polar residues" evidence="3">
    <location>
        <begin position="271"/>
        <end position="280"/>
    </location>
</feature>
<feature type="compositionally biased region" description="Basic and acidic residues" evidence="3">
    <location>
        <begin position="297"/>
        <end position="325"/>
    </location>
</feature>
<feature type="compositionally biased region" description="Basic and acidic residues" evidence="3">
    <location>
        <begin position="481"/>
        <end position="490"/>
    </location>
</feature>
<feature type="compositionally biased region" description="Polar residues" evidence="3">
    <location>
        <begin position="497"/>
        <end position="509"/>
    </location>
</feature>
<feature type="compositionally biased region" description="Basic and acidic residues" evidence="3">
    <location>
        <begin position="522"/>
        <end position="538"/>
    </location>
</feature>
<feature type="compositionally biased region" description="Basic residues" evidence="3">
    <location>
        <begin position="539"/>
        <end position="551"/>
    </location>
</feature>
<feature type="compositionally biased region" description="Basic and acidic residues" evidence="3">
    <location>
        <begin position="888"/>
        <end position="912"/>
    </location>
</feature>
<feature type="modified residue" description="Phosphoserine" evidence="16">
    <location>
        <position position="159"/>
    </location>
</feature>
<feature type="modified residue" description="Phosphoserine" evidence="17">
    <location>
        <position position="488"/>
    </location>
</feature>
<feature type="modified residue" description="N6-acetyllysine" evidence="14">
    <location>
        <position position="843"/>
    </location>
</feature>
<feature type="modified residue" description="Phosphoserine" evidence="13 15">
    <location>
        <position position="878"/>
    </location>
</feature>
<feature type="modified residue" description="Phosphoserine" evidence="13 15">
    <location>
        <position position="880"/>
    </location>
</feature>
<feature type="disulfide bond" description="Interchain (with C-100)" evidence="12">
    <location>
        <position position="96"/>
    </location>
</feature>
<feature type="disulfide bond" description="Interchain (with C-96)" evidence="12">
    <location>
        <position position="100"/>
    </location>
</feature>
<feature type="splice variant" id="VSP_007760" description="In isoform 2." evidence="10">
    <original>VDKKPENDIVKSPQENLREPKRKRGRPPSIAPTAVDS</original>
    <variation>KTRQTPFHSSYCCGFKLSNFATNNIGTEKKENIKRM</variation>
    <location>
        <begin position="237"/>
        <end position="273"/>
    </location>
</feature>
<feature type="splice variant" id="VSP_007761" description="In isoform 2." evidence="10">
    <location>
        <begin position="274"/>
        <end position="1012"/>
    </location>
</feature>
<feature type="sequence variant" id="VAR_051600" description="In dbSNP:rs17431878." evidence="5">
    <original>V</original>
    <variation>M</variation>
    <location>
        <position position="605"/>
    </location>
</feature>
<feature type="mutagenesis site" description="Abolishes homodimerization." evidence="8">
    <original>C</original>
    <variation>S</variation>
    <location>
        <position position="96"/>
    </location>
</feature>
<feature type="mutagenesis site" description="Abolishes interaction with methylated p53." evidence="8">
    <original>W</original>
    <variation>A</variation>
    <location>
        <position position="97"/>
    </location>
</feature>
<feature type="mutagenesis site" description="Abolishes homodimerization." evidence="8">
    <original>C</original>
    <variation>S</variation>
    <location>
        <position position="100"/>
    </location>
</feature>
<feature type="mutagenesis site" description="Abolishes interaction with methylated p53." evidence="8">
    <original>Y</original>
    <variation>A</variation>
    <location>
        <position position="103"/>
    </location>
</feature>
<feature type="sequence conflict" description="In Ref. 7; AAG49888." evidence="11" ref="7">
    <original>KE</original>
    <variation>QG</variation>
    <location>
        <begin position="221"/>
        <end position="222"/>
    </location>
</feature>
<feature type="sequence conflict" description="In Ref. 7; AAG49888." evidence="11" ref="7">
    <original>E</original>
    <variation>G</variation>
    <location>
        <position position="226"/>
    </location>
</feature>
<feature type="sequence conflict" description="In Ref. 6; AAH80598." evidence="11" ref="6">
    <original>S</original>
    <variation>F</variation>
    <location>
        <position position="372"/>
    </location>
</feature>
<feature type="sequence conflict" description="In Ref. 7; AAG49888." evidence="11" ref="7">
    <original>S</original>
    <variation>F</variation>
    <location>
        <position position="516"/>
    </location>
</feature>
<feature type="sequence conflict" description="In Ref. 3; BAG37103." evidence="11" ref="3">
    <original>K</original>
    <variation>E</variation>
    <location>
        <position position="532"/>
    </location>
</feature>
<feature type="sequence conflict" description="In Ref. 3; BAG37103." evidence="11" ref="3">
    <original>E</original>
    <variation>G</variation>
    <location>
        <position position="671"/>
    </location>
</feature>
<feature type="strand" evidence="19">
    <location>
        <begin position="18"/>
        <end position="22"/>
    </location>
</feature>
<feature type="strand" evidence="19">
    <location>
        <begin position="28"/>
        <end position="37"/>
    </location>
</feature>
<feature type="turn" evidence="19">
    <location>
        <begin position="38"/>
        <end position="41"/>
    </location>
</feature>
<feature type="strand" evidence="19">
    <location>
        <begin position="42"/>
        <end position="47"/>
    </location>
</feature>
<feature type="helix" evidence="19">
    <location>
        <begin position="52"/>
        <end position="54"/>
    </location>
</feature>
<feature type="strand" evidence="19">
    <location>
        <begin position="56"/>
        <end position="59"/>
    </location>
</feature>
<feature type="strand" evidence="18">
    <location>
        <begin position="92"/>
        <end position="96"/>
    </location>
</feature>
<feature type="strand" evidence="18">
    <location>
        <begin position="102"/>
        <end position="110"/>
    </location>
</feature>
<feature type="strand" evidence="18">
    <location>
        <begin position="114"/>
        <end position="120"/>
    </location>
</feature>
<feature type="strand" evidence="18">
    <location>
        <begin position="125"/>
        <end position="129"/>
    </location>
</feature>
<feature type="helix" evidence="18">
    <location>
        <begin position="130"/>
        <end position="132"/>
    </location>
</feature>
<feature type="strand" evidence="18">
    <location>
        <begin position="133"/>
        <end position="135"/>
    </location>
</feature>
<feature type="strand" evidence="20">
    <location>
        <begin position="666"/>
        <end position="668"/>
    </location>
</feature>
<feature type="turn" evidence="20">
    <location>
        <begin position="670"/>
        <end position="672"/>
    </location>
</feature>
<feature type="strand" evidence="20">
    <location>
        <begin position="675"/>
        <end position="677"/>
    </location>
</feature>
<feature type="turn" evidence="20">
    <location>
        <begin position="678"/>
        <end position="682"/>
    </location>
</feature>
<feature type="turn" evidence="20">
    <location>
        <begin position="685"/>
        <end position="687"/>
    </location>
</feature>
<feature type="turn" evidence="20">
    <location>
        <begin position="695"/>
        <end position="697"/>
    </location>
</feature>
<feature type="sequence conflict" description="In Ref. 1; AAF34184." evidence="11" ref="1">
    <original>KTR</original>
    <variation>KKTS</variation>
    <location sequence="Q9BVI0-2">
        <begin position="237"/>
        <end position="239"/>
    </location>
</feature>